<sequence length="519" mass="57179">MAASFLTMDNSRTRQNMNGSANWSQQSGRTSTSSLEDLEIPKFRSFAPSSISISPSLVSPSTCFSPSLFLDSPAFVSSSANVLASPTTGALITNVTNQKGINEGDKSNNNNFNLFDFSFHTQSSGVSAPTTTTTTTTTTTTTNSSIFQSQEQQKKNQSEQWSQTETRPNNQAVSYNGREQRKGEDGYNWRKYGQKQVKGSENPRSYYKCTFPNCPTKKKVERSLEGQITEIVYKGSHNHPKPQSTRRSSSSSSTFHSAVYNASLDHNRQASSDQPNSNNSFHQSDSFGMQQEDNTTSDSVGDDEFEQGSSIVSRDEEDCGSEPEAKRWKGDNETNGGNGGGSKTVREPRIVVQTTSDIDILDDGYRWRKYGQKVVKGNPNPRSYYKCTTIGCPVRKHVERASHDMRAVITTYEGKHNHDVPAARGSGYATNRAPQDSSSVPIRPAAIAGHSNYTTSSQAPYTLQMLHNNNTNTGPFGYAMNNNNNNSNLQTQQNFVGGGFSRAKEEPNEETSFFDSFMP</sequence>
<keyword id="KW-0002">3D-structure</keyword>
<keyword id="KW-0238">DNA-binding</keyword>
<keyword id="KW-0479">Metal-binding</keyword>
<keyword id="KW-0539">Nucleus</keyword>
<keyword id="KW-0597">Phosphoprotein</keyword>
<keyword id="KW-0611">Plant defense</keyword>
<keyword id="KW-1185">Reference proteome</keyword>
<keyword id="KW-0677">Repeat</keyword>
<keyword id="KW-0346">Stress response</keyword>
<keyword id="KW-0804">Transcription</keyword>
<keyword id="KW-0805">Transcription regulation</keyword>
<keyword id="KW-0862">Zinc</keyword>
<comment type="function">
    <text evidence="6 7 9 10 11">Transcription factor. Interacts specifically with the W box (5'-TTGAC[CT]-3'), a frequently occurring elicitor-responsive cis-acting element. Involved in defense responses. Required for resistance to the necrotrophic fungal pathogen B.cinerea (PubMed:17059405, PubMed:21990940). Regulates the antagonistic relationship between defense pathways mediating responses to the bacterial pathogen P. syringae and the necrotrophic pathogen B.cinerea (PubMed:17059405). Required for the phytoalexin camalexin synthesis following infection with B.cinerea. Acts as a positive regulator of the camalexin biosynthetic genes PAD3 (CYP71B15) and CYP71A13 by binding to their promoters (PubMed:21498677, PubMed:22392279). Acts downstream of MPK3 and MPK6 in reprogramming the expression of camalexin biosynthetic genes, which drives the metabolic flow to camalexin production (PubMed:21498677). Functions with WRKY25 as positive regulator of salt stress response and abscisic acid (ABA) signaling (PubMed:18839316). Functions with WRKY25 and WRKY26 as positive regulator of plant thermotolerance by partially participating in ethylene-response signal transduction pathway (PubMed:21336597). The DNA-binding activity of WRKY33 is increased by SIB1 and SIB2 (PubMed:21990940).</text>
</comment>
<comment type="subunit">
    <text evidence="4 8 10 12">Interacts with MKS1 (PubMed:15990873). Interacts with ATG18A (PubMed:21395886). Interacts with SIB1 and SIB2 (PubMed:21990940). Interacts with VQ1 and VQ10 (PubMed:22535423).</text>
</comment>
<comment type="interaction">
    <interactant intactId="EBI-1392374">
        <id>Q8S8P5</id>
    </interactant>
    <interactant intactId="EBI-6510711">
        <id>Q93VB2</id>
        <label>ATG18A</label>
    </interactant>
    <organismsDiffer>false</organismsDiffer>
    <experiments>3</experiments>
</comment>
<comment type="interaction">
    <interactant intactId="EBI-1392374">
        <id>Q8S8P5</id>
    </interactant>
    <interactant intactId="EBI-1392198">
        <id>Q8LGD5</id>
        <label>MKS1</label>
    </interactant>
    <organismsDiffer>false</organismsDiffer>
    <experiments>5</experiments>
</comment>
<comment type="interaction">
    <interactant intactId="EBI-1392374">
        <id>Q8S8P5</id>
    </interactant>
    <interactant intactId="EBI-994375">
        <id>Q39024</id>
        <label>MPK4</label>
    </interactant>
    <organismsDiffer>false</organismsDiffer>
    <experiments>2</experiments>
</comment>
<comment type="subcellular location">
    <subcellularLocation>
        <location evidence="5 6 10">Nucleus</location>
    </subcellularLocation>
</comment>
<comment type="tissue specificity">
    <text evidence="6">Highly expressed in roots, leaves and flowers, and at lower levels in stems, siliques and seeds.</text>
</comment>
<comment type="induction">
    <text evidence="5 6 9 10">By salt stress (PubMed:18839316). Induced by infection with the necrotrophic fungal pathogen B.cinerea (PubMed:17059405, PubMed:21498677, PubMed:21990940). Induced by infection with the bacterial pathogen P.syringae pv. tomato DC3000 (PubMed:17059405).</text>
</comment>
<comment type="PTM">
    <text evidence="9 14">Phosphorylated by MPK4 (PubMed:15990873). Phosphorylated on serine residues by MPK3 and MPK6 following infection with the necrotrophic fungal pathogen B.cinerea (PubMed:21498677).</text>
</comment>
<comment type="disruption phenotype">
    <text evidence="5 10">No visible phenotype under normal growth conditions, but mutant plants are extremely susceptible to the necrotrophic fungal pathogen B.cinerea.</text>
</comment>
<comment type="similarity">
    <text evidence="13">Belongs to the WRKY group I family.</text>
</comment>
<comment type="sequence caution" evidence="13">
    <conflict type="erroneous initiation">
        <sequence resource="EMBL-CDS" id="AAM14994"/>
    </conflict>
    <text>Truncated N-terminus.</text>
</comment>
<feature type="chain" id="PRO_0000133675" description="Probable WRKY transcription factor 33">
    <location>
        <begin position="1"/>
        <end position="519"/>
    </location>
</feature>
<feature type="DNA-binding region" description="WRKY 1" evidence="2">
    <location>
        <begin position="178"/>
        <end position="242"/>
    </location>
</feature>
<feature type="DNA-binding region" description="WRKY 2" evidence="2">
    <location>
        <begin position="356"/>
        <end position="421"/>
    </location>
</feature>
<feature type="region of interest" description="Disordered" evidence="3">
    <location>
        <begin position="1"/>
        <end position="34"/>
    </location>
</feature>
<feature type="region of interest" description="Disordered" evidence="3">
    <location>
        <begin position="123"/>
        <end position="212"/>
    </location>
</feature>
<feature type="region of interest" description="Disordered" evidence="3">
    <location>
        <begin position="232"/>
        <end position="255"/>
    </location>
</feature>
<feature type="region of interest" description="Disordered" evidence="3">
    <location>
        <begin position="267"/>
        <end position="349"/>
    </location>
</feature>
<feature type="compositionally biased region" description="Polar residues" evidence="3">
    <location>
        <begin position="7"/>
        <end position="34"/>
    </location>
</feature>
<feature type="compositionally biased region" description="Low complexity" evidence="3">
    <location>
        <begin position="130"/>
        <end position="142"/>
    </location>
</feature>
<feature type="compositionally biased region" description="Polar residues" evidence="3">
    <location>
        <begin position="164"/>
        <end position="174"/>
    </location>
</feature>
<feature type="compositionally biased region" description="Basic and acidic residues" evidence="3">
    <location>
        <begin position="178"/>
        <end position="188"/>
    </location>
</feature>
<feature type="compositionally biased region" description="Low complexity" evidence="3">
    <location>
        <begin position="245"/>
        <end position="254"/>
    </location>
</feature>
<feature type="compositionally biased region" description="Polar residues" evidence="3">
    <location>
        <begin position="269"/>
        <end position="299"/>
    </location>
</feature>
<feature type="compositionally biased region" description="Basic and acidic residues" evidence="3">
    <location>
        <begin position="323"/>
        <end position="332"/>
    </location>
</feature>
<feature type="binding site" evidence="1">
    <location>
        <position position="209"/>
    </location>
    <ligand>
        <name>Zn(2+)</name>
        <dbReference type="ChEBI" id="CHEBI:29105"/>
    </ligand>
</feature>
<feature type="binding site" evidence="1">
    <location>
        <position position="214"/>
    </location>
    <ligand>
        <name>Zn(2+)</name>
        <dbReference type="ChEBI" id="CHEBI:29105"/>
    </ligand>
</feature>
<feature type="binding site" evidence="1">
    <location>
        <position position="237"/>
    </location>
    <ligand>
        <name>Zn(2+)</name>
        <dbReference type="ChEBI" id="CHEBI:29105"/>
    </ligand>
</feature>
<feature type="binding site" evidence="1">
    <location>
        <position position="239"/>
    </location>
    <ligand>
        <name>Zn(2+)</name>
        <dbReference type="ChEBI" id="CHEBI:29105"/>
    </ligand>
</feature>
<feature type="binding site" evidence="1">
    <location>
        <position position="387"/>
    </location>
    <ligand>
        <name>Zn(2+)</name>
        <dbReference type="ChEBI" id="CHEBI:29105"/>
    </ligand>
</feature>
<feature type="binding site" evidence="1">
    <location>
        <position position="392"/>
    </location>
    <ligand>
        <name>Zn(2+)</name>
        <dbReference type="ChEBI" id="CHEBI:29105"/>
    </ligand>
</feature>
<feature type="binding site" evidence="1">
    <location>
        <position position="416"/>
    </location>
    <ligand>
        <name>Zn(2+)</name>
        <dbReference type="ChEBI" id="CHEBI:29105"/>
    </ligand>
</feature>
<feature type="binding site" evidence="1">
    <location>
        <position position="418"/>
    </location>
    <ligand>
        <name>Zn(2+)</name>
        <dbReference type="ChEBI" id="CHEBI:29105"/>
    </ligand>
</feature>
<feature type="mutagenesis site" description="Weak interaction with VQ10 protein." evidence="12">
    <original>D</original>
    <variation>A</variation>
    <location>
        <position position="359"/>
    </location>
</feature>
<feature type="mutagenesis site" description="Loss of interaction with VQ10 protein." evidence="12">
    <original>D</original>
    <variation>A</variation>
    <location>
        <position position="362"/>
    </location>
</feature>
<feature type="mutagenesis site" description="No effect on the interaction with VQ10 protein." evidence="12">
    <original>R</original>
    <variation>Q</variation>
    <location>
        <position position="366"/>
    </location>
</feature>
<feature type="strand" evidence="15">
    <location>
        <begin position="189"/>
        <end position="195"/>
    </location>
</feature>
<feature type="strand" evidence="15">
    <location>
        <begin position="204"/>
        <end position="209"/>
    </location>
</feature>
<feature type="strand" evidence="15">
    <location>
        <begin position="217"/>
        <end position="222"/>
    </location>
</feature>
<feature type="strand" evidence="15">
    <location>
        <begin position="228"/>
        <end position="235"/>
    </location>
</feature>
<proteinExistence type="evidence at protein level"/>
<accession>Q8S8P5</accession>
<accession>Q0WWP2</accession>
<evidence type="ECO:0000250" key="1">
    <source>
        <dbReference type="UniProtKB" id="Q9SI37"/>
    </source>
</evidence>
<evidence type="ECO:0000255" key="2">
    <source>
        <dbReference type="PROSITE-ProRule" id="PRU00223"/>
    </source>
</evidence>
<evidence type="ECO:0000256" key="3">
    <source>
        <dbReference type="SAM" id="MobiDB-lite"/>
    </source>
</evidence>
<evidence type="ECO:0000269" key="4">
    <source>
    </source>
</evidence>
<evidence type="ECO:0000269" key="5">
    <source>
    </source>
</evidence>
<evidence type="ECO:0000269" key="6">
    <source>
    </source>
</evidence>
<evidence type="ECO:0000269" key="7">
    <source>
    </source>
</evidence>
<evidence type="ECO:0000269" key="8">
    <source>
    </source>
</evidence>
<evidence type="ECO:0000269" key="9">
    <source>
    </source>
</evidence>
<evidence type="ECO:0000269" key="10">
    <source>
    </source>
</evidence>
<evidence type="ECO:0000269" key="11">
    <source>
    </source>
</evidence>
<evidence type="ECO:0000269" key="12">
    <source>
    </source>
</evidence>
<evidence type="ECO:0000305" key="13"/>
<evidence type="ECO:0000305" key="14">
    <source>
    </source>
</evidence>
<evidence type="ECO:0007829" key="15">
    <source>
        <dbReference type="PDB" id="6J4G"/>
    </source>
</evidence>
<name>WRK33_ARATH</name>
<gene>
    <name type="primary">WRKY33</name>
    <name type="ordered locus">At2g38470</name>
    <name type="ORF">T19C21.4</name>
</gene>
<protein>
    <recommendedName>
        <fullName>Probable WRKY transcription factor 33</fullName>
    </recommendedName>
    <alternativeName>
        <fullName>WRKY DNA-binding protein 33</fullName>
    </alternativeName>
</protein>
<dbReference type="EMBL" id="AC004683">
    <property type="protein sequence ID" value="AAM14994.1"/>
    <property type="status" value="ALT_INIT"/>
    <property type="molecule type" value="Genomic_DNA"/>
</dbReference>
<dbReference type="EMBL" id="CP002685">
    <property type="protein sequence ID" value="AEC09541.1"/>
    <property type="molecule type" value="Genomic_DNA"/>
</dbReference>
<dbReference type="EMBL" id="AK226301">
    <property type="protein sequence ID" value="BAE98456.1"/>
    <property type="molecule type" value="mRNA"/>
</dbReference>
<dbReference type="EMBL" id="AF509499">
    <property type="protein sequence ID" value="AAM34736.1"/>
    <property type="molecule type" value="mRNA"/>
</dbReference>
<dbReference type="PIR" id="T02498">
    <property type="entry name" value="T02498"/>
</dbReference>
<dbReference type="RefSeq" id="NP_181381.2">
    <property type="nucleotide sequence ID" value="NM_129404.4"/>
</dbReference>
<dbReference type="PDB" id="6J4G">
    <property type="method" value="X-ray"/>
    <property type="resolution" value="3.00 A"/>
    <property type="chains" value="B=178-242"/>
</dbReference>
<dbReference type="PDB" id="8K31">
    <property type="method" value="NMR"/>
    <property type="chains" value="B=331-422"/>
</dbReference>
<dbReference type="PDBsum" id="6J4G"/>
<dbReference type="PDBsum" id="8K31"/>
<dbReference type="SMR" id="Q8S8P5"/>
<dbReference type="BioGRID" id="3771">
    <property type="interactions" value="29"/>
</dbReference>
<dbReference type="FunCoup" id="Q8S8P5">
    <property type="interactions" value="442"/>
</dbReference>
<dbReference type="IntAct" id="Q8S8P5">
    <property type="interactions" value="5"/>
</dbReference>
<dbReference type="MINT" id="Q8S8P5"/>
<dbReference type="STRING" id="3702.Q8S8P5"/>
<dbReference type="iPTMnet" id="Q8S8P5"/>
<dbReference type="PaxDb" id="3702-AT2G38470.1"/>
<dbReference type="ProteomicsDB" id="234271"/>
<dbReference type="EnsemblPlants" id="AT2G38470.1">
    <property type="protein sequence ID" value="AT2G38470.1"/>
    <property type="gene ID" value="AT2G38470"/>
</dbReference>
<dbReference type="GeneID" id="818429"/>
<dbReference type="Gramene" id="AT2G38470.1">
    <property type="protein sequence ID" value="AT2G38470.1"/>
    <property type="gene ID" value="AT2G38470"/>
</dbReference>
<dbReference type="KEGG" id="ath:AT2G38470"/>
<dbReference type="Araport" id="AT2G38470"/>
<dbReference type="TAIR" id="AT2G38470">
    <property type="gene designation" value="WRKY33"/>
</dbReference>
<dbReference type="eggNOG" id="ENOG502QRXJ">
    <property type="taxonomic scope" value="Eukaryota"/>
</dbReference>
<dbReference type="HOGENOM" id="CLU_012086_5_1_1"/>
<dbReference type="InParanoid" id="Q8S8P5"/>
<dbReference type="OMA" id="FGMQQED"/>
<dbReference type="PhylomeDB" id="Q8S8P5"/>
<dbReference type="PRO" id="PR:Q8S8P5"/>
<dbReference type="Proteomes" id="UP000006548">
    <property type="component" value="Chromosome 2"/>
</dbReference>
<dbReference type="ExpressionAtlas" id="Q8S8P5">
    <property type="expression patterns" value="baseline and differential"/>
</dbReference>
<dbReference type="GO" id="GO:0005634">
    <property type="term" value="C:nucleus"/>
    <property type="evidence" value="ECO:0000314"/>
    <property type="project" value="TAIR"/>
</dbReference>
<dbReference type="GO" id="GO:0003700">
    <property type="term" value="F:DNA-binding transcription factor activity"/>
    <property type="evidence" value="ECO:0000314"/>
    <property type="project" value="TAIR"/>
</dbReference>
<dbReference type="GO" id="GO:0046872">
    <property type="term" value="F:metal ion binding"/>
    <property type="evidence" value="ECO:0007669"/>
    <property type="project" value="UniProtKB-KW"/>
</dbReference>
<dbReference type="GO" id="GO:0000976">
    <property type="term" value="F:transcription cis-regulatory region binding"/>
    <property type="evidence" value="ECO:0000353"/>
    <property type="project" value="TAIR"/>
</dbReference>
<dbReference type="GO" id="GO:0010120">
    <property type="term" value="P:camalexin biosynthetic process"/>
    <property type="evidence" value="ECO:0000315"/>
    <property type="project" value="TAIR"/>
</dbReference>
<dbReference type="GO" id="GO:0070370">
    <property type="term" value="P:cellular heat acclimation"/>
    <property type="evidence" value="ECO:0000315"/>
    <property type="project" value="TAIR"/>
</dbReference>
<dbReference type="GO" id="GO:0034605">
    <property type="term" value="P:cellular response to heat"/>
    <property type="evidence" value="ECO:0000315"/>
    <property type="project" value="TAIR"/>
</dbReference>
<dbReference type="GO" id="GO:0042742">
    <property type="term" value="P:defense response to bacterium"/>
    <property type="evidence" value="ECO:0000315"/>
    <property type="project" value="TAIR"/>
</dbReference>
<dbReference type="GO" id="GO:0050832">
    <property type="term" value="P:defense response to fungus"/>
    <property type="evidence" value="ECO:0000315"/>
    <property type="project" value="TAIR"/>
</dbReference>
<dbReference type="GO" id="GO:0010508">
    <property type="term" value="P:positive regulation of autophagy"/>
    <property type="evidence" value="ECO:0000315"/>
    <property type="project" value="TAIR"/>
</dbReference>
<dbReference type="GO" id="GO:0009409">
    <property type="term" value="P:response to cold"/>
    <property type="evidence" value="ECO:0000270"/>
    <property type="project" value="TAIR"/>
</dbReference>
<dbReference type="GO" id="GO:0009408">
    <property type="term" value="P:response to heat"/>
    <property type="evidence" value="ECO:0000270"/>
    <property type="project" value="TAIR"/>
</dbReference>
<dbReference type="GO" id="GO:0006970">
    <property type="term" value="P:response to osmotic stress"/>
    <property type="evidence" value="ECO:0000270"/>
    <property type="project" value="TAIR"/>
</dbReference>
<dbReference type="GO" id="GO:0009651">
    <property type="term" value="P:response to salt stress"/>
    <property type="evidence" value="ECO:0000315"/>
    <property type="project" value="TAIR"/>
</dbReference>
<dbReference type="GO" id="GO:0009414">
    <property type="term" value="P:response to water deprivation"/>
    <property type="evidence" value="ECO:0000270"/>
    <property type="project" value="TAIR"/>
</dbReference>
<dbReference type="GO" id="GO:0009627">
    <property type="term" value="P:systemic acquired resistance"/>
    <property type="evidence" value="ECO:0000315"/>
    <property type="project" value="TAIR"/>
</dbReference>
<dbReference type="FunFam" id="2.20.25.80:FF:000006">
    <property type="entry name" value="WRKY transcription factor"/>
    <property type="match status" value="1"/>
</dbReference>
<dbReference type="FunFam" id="2.20.25.80:FF:000001">
    <property type="entry name" value="WRKY transcription factor 33"/>
    <property type="match status" value="1"/>
</dbReference>
<dbReference type="Gene3D" id="2.20.25.80">
    <property type="entry name" value="WRKY domain"/>
    <property type="match status" value="2"/>
</dbReference>
<dbReference type="InterPro" id="IPR003657">
    <property type="entry name" value="WRKY_dom"/>
</dbReference>
<dbReference type="InterPro" id="IPR036576">
    <property type="entry name" value="WRKY_dom_sf"/>
</dbReference>
<dbReference type="InterPro" id="IPR044810">
    <property type="entry name" value="WRKY_plant"/>
</dbReference>
<dbReference type="PANTHER" id="PTHR31221:SF1">
    <property type="entry name" value="WRKY TRANSCRIPTION FACTOR 33-RELATED"/>
    <property type="match status" value="1"/>
</dbReference>
<dbReference type="PANTHER" id="PTHR31221">
    <property type="entry name" value="WRKY TRANSCRIPTION FACTOR PROTEIN 1-RELATED"/>
    <property type="match status" value="1"/>
</dbReference>
<dbReference type="Pfam" id="PF03106">
    <property type="entry name" value="WRKY"/>
    <property type="match status" value="2"/>
</dbReference>
<dbReference type="SMART" id="SM00774">
    <property type="entry name" value="WRKY"/>
    <property type="match status" value="2"/>
</dbReference>
<dbReference type="SUPFAM" id="SSF118290">
    <property type="entry name" value="WRKY DNA-binding domain"/>
    <property type="match status" value="2"/>
</dbReference>
<dbReference type="PROSITE" id="PS50811">
    <property type="entry name" value="WRKY"/>
    <property type="match status" value="2"/>
</dbReference>
<organism>
    <name type="scientific">Arabidopsis thaliana</name>
    <name type="common">Mouse-ear cress</name>
    <dbReference type="NCBI Taxonomy" id="3702"/>
    <lineage>
        <taxon>Eukaryota</taxon>
        <taxon>Viridiplantae</taxon>
        <taxon>Streptophyta</taxon>
        <taxon>Embryophyta</taxon>
        <taxon>Tracheophyta</taxon>
        <taxon>Spermatophyta</taxon>
        <taxon>Magnoliopsida</taxon>
        <taxon>eudicotyledons</taxon>
        <taxon>Gunneridae</taxon>
        <taxon>Pentapetalae</taxon>
        <taxon>rosids</taxon>
        <taxon>malvids</taxon>
        <taxon>Brassicales</taxon>
        <taxon>Brassicaceae</taxon>
        <taxon>Camelineae</taxon>
        <taxon>Arabidopsis</taxon>
    </lineage>
</organism>
<reference key="1">
    <citation type="journal article" date="1999" name="Nature">
        <title>Sequence and analysis of chromosome 2 of the plant Arabidopsis thaliana.</title>
        <authorList>
            <person name="Lin X."/>
            <person name="Kaul S."/>
            <person name="Rounsley S.D."/>
            <person name="Shea T.P."/>
            <person name="Benito M.-I."/>
            <person name="Town C.D."/>
            <person name="Fujii C.Y."/>
            <person name="Mason T.M."/>
            <person name="Bowman C.L."/>
            <person name="Barnstead M.E."/>
            <person name="Feldblyum T.V."/>
            <person name="Buell C.R."/>
            <person name="Ketchum K.A."/>
            <person name="Lee J.J."/>
            <person name="Ronning C.M."/>
            <person name="Koo H.L."/>
            <person name="Moffat K.S."/>
            <person name="Cronin L.A."/>
            <person name="Shen M."/>
            <person name="Pai G."/>
            <person name="Van Aken S."/>
            <person name="Umayam L."/>
            <person name="Tallon L.J."/>
            <person name="Gill J.E."/>
            <person name="Adams M.D."/>
            <person name="Carrera A.J."/>
            <person name="Creasy T.H."/>
            <person name="Goodman H.M."/>
            <person name="Somerville C.R."/>
            <person name="Copenhaver G.P."/>
            <person name="Preuss D."/>
            <person name="Nierman W.C."/>
            <person name="White O."/>
            <person name="Eisen J.A."/>
            <person name="Salzberg S.L."/>
            <person name="Fraser C.M."/>
            <person name="Venter J.C."/>
        </authorList>
    </citation>
    <scope>NUCLEOTIDE SEQUENCE [LARGE SCALE GENOMIC DNA]</scope>
    <source>
        <strain>cv. Columbia</strain>
    </source>
</reference>
<reference key="2">
    <citation type="journal article" date="2017" name="Plant J.">
        <title>Araport11: a complete reannotation of the Arabidopsis thaliana reference genome.</title>
        <authorList>
            <person name="Cheng C.Y."/>
            <person name="Krishnakumar V."/>
            <person name="Chan A.P."/>
            <person name="Thibaud-Nissen F."/>
            <person name="Schobel S."/>
            <person name="Town C.D."/>
        </authorList>
    </citation>
    <scope>GENOME REANNOTATION</scope>
    <source>
        <strain>cv. Columbia</strain>
    </source>
</reference>
<reference key="3">
    <citation type="submission" date="2006-07" db="EMBL/GenBank/DDBJ databases">
        <title>Large-scale analysis of RIKEN Arabidopsis full-length (RAFL) cDNAs.</title>
        <authorList>
            <person name="Totoki Y."/>
            <person name="Seki M."/>
            <person name="Ishida J."/>
            <person name="Nakajima M."/>
            <person name="Enju A."/>
            <person name="Kamiya A."/>
            <person name="Narusaka M."/>
            <person name="Shin-i T."/>
            <person name="Nakagawa M."/>
            <person name="Sakamoto N."/>
            <person name="Oishi K."/>
            <person name="Kohara Y."/>
            <person name="Kobayashi M."/>
            <person name="Toyoda A."/>
            <person name="Sakaki Y."/>
            <person name="Sakurai T."/>
            <person name="Iida K."/>
            <person name="Akiyama K."/>
            <person name="Satou M."/>
            <person name="Toyoda T."/>
            <person name="Konagaya A."/>
            <person name="Carninci P."/>
            <person name="Kawai J."/>
            <person name="Hayashizaki Y."/>
            <person name="Shinozaki K."/>
        </authorList>
    </citation>
    <scope>NUCLEOTIDE SEQUENCE [LARGE SCALE MRNA]</scope>
    <source>
        <strain>cv. Columbia</strain>
    </source>
</reference>
<reference key="4">
    <citation type="submission" date="2002-05" db="EMBL/GenBank/DDBJ databases">
        <title>Arabidopsis thaliana transcription factor WRKY33.</title>
        <authorList>
            <person name="Lippok B."/>
            <person name="Somssich I.E."/>
        </authorList>
    </citation>
    <scope>NUCLEOTIDE SEQUENCE [MRNA] OF 8-519</scope>
    <source>
        <strain>cv. Columbia</strain>
        <tissue>Flower</tissue>
    </source>
</reference>
<reference key="5">
    <citation type="journal article" date="2005" name="EMBO J.">
        <title>The MAP kinase substrate MKS1 is a regulator of plant defense responses.</title>
        <authorList>
            <person name="Andreasson E."/>
            <person name="Jenkins T."/>
            <person name="Brodersen P."/>
            <person name="Thorgrimsen S."/>
            <person name="Petersen N.H.T."/>
            <person name="Zhu S."/>
            <person name="Qiu J.-L."/>
            <person name="Micheelsen P."/>
            <person name="Rocher A."/>
            <person name="Petersen M."/>
            <person name="Newman M.-A."/>
            <person name="Bjoern Nielsen H."/>
            <person name="Hirt H."/>
            <person name="Somssich I.E."/>
            <person name="Mattsson O."/>
            <person name="Mundy J."/>
        </authorList>
    </citation>
    <scope>INTERACTION WITH MKS1</scope>
    <scope>PHOSPHORYLATION</scope>
</reference>
<reference key="6">
    <citation type="journal article" date="2006" name="Plant J.">
        <title>Arabidopsis WRKY33 transcription factor is required for resistance to necrotrophic fungal pathogens.</title>
        <authorList>
            <person name="Zheng Z."/>
            <person name="Qamar S.A."/>
            <person name="Chen Z."/>
            <person name="Mengiste T."/>
        </authorList>
    </citation>
    <scope>FUNCTION</scope>
    <scope>SUBCELLULAR LOCATION</scope>
    <scope>INDUCTION</scope>
    <scope>DISRUPTION PHENOTYPE</scope>
</reference>
<reference key="7">
    <citation type="journal article" date="2009" name="Plant Mol. Biol.">
        <title>Functional characterization of Arabidopsis NaCl-inducible WRKY25 and WRKY33 transcription factors in abiotic stresses.</title>
        <authorList>
            <person name="Jiang Y."/>
            <person name="Deyholos M.K."/>
        </authorList>
    </citation>
    <scope>FUNCTION</scope>
    <scope>SUBCELLULAR LOCATION</scope>
    <scope>TISSUE SPECIFICITY</scope>
    <scope>INDUCTION BY SALT</scope>
</reference>
<reference key="8">
    <citation type="journal article" date="2011" name="Planta">
        <title>Arabidopsis thaliana WRKY25, WRKY26, and WRKY33 coordinate induction of plant thermotolerance.</title>
        <authorList>
            <person name="Li S."/>
            <person name="Fu Q."/>
            <person name="Chen L."/>
            <person name="Huang W."/>
            <person name="Yu D."/>
        </authorList>
    </citation>
    <scope>FUNCTION</scope>
</reference>
<reference key="9">
    <citation type="journal article" date="2011" name="Plant Cell">
        <title>Phosphorylation of a WRKY transcription factor by two pathogen-responsive MAPKs drives phytoalexin biosynthesis in Arabidopsis.</title>
        <authorList>
            <person name="Mao G."/>
            <person name="Meng X."/>
            <person name="Liu Y."/>
            <person name="Zheng Z."/>
            <person name="Chen Z."/>
            <person name="Zhang S."/>
        </authorList>
    </citation>
    <scope>FUNCTION</scope>
    <scope>INDUCTION</scope>
    <scope>PHOSPHORYLATION</scope>
</reference>
<reference key="10">
    <citation type="journal article" date="2011" name="Plant Cell">
        <title>Arabidopsis sigma factor binding proteins are activators of the WRKY33 transcription factor in plant defense.</title>
        <authorList>
            <person name="Lai Z."/>
            <person name="Li Y."/>
            <person name="Wang F."/>
            <person name="Cheng Y."/>
            <person name="Fan B."/>
            <person name="Yu J.Q."/>
            <person name="Chen Z."/>
        </authorList>
    </citation>
    <scope>FUNCTION</scope>
    <scope>INTERACTION WITH SIB1 AND SIB2</scope>
    <scope>SUBCELLULAR LOCATION</scope>
    <scope>INDUCTION</scope>
    <scope>DISRUPTION PHENOTYPE</scope>
</reference>
<reference key="11">
    <citation type="journal article" date="2011" name="Plant J.">
        <title>A critical role of autophagy in plant resistance to necrotrophic fungal pathogens.</title>
        <authorList>
            <person name="Lai Z."/>
            <person name="Wang F."/>
            <person name="Zheng Z."/>
            <person name="Fan B."/>
            <person name="Chen Z."/>
        </authorList>
    </citation>
    <scope>INTERACTION WITH ATG18A</scope>
</reference>
<reference key="12">
    <citation type="journal article" date="2012" name="Plant Physiol.">
        <title>Arabidopsis WRKY33 is a key transcriptional regulator of hormonal and metabolic responses toward Botrytis cinerea infection.</title>
        <authorList>
            <person name="Birkenbihl R.P."/>
            <person name="Diezel C."/>
            <person name="Somssich I.E."/>
        </authorList>
    </citation>
    <scope>FUNCTION</scope>
</reference>
<reference key="13">
    <citation type="journal article" date="2012" name="Plant Physiol.">
        <title>Structural and functional analysis of VQ motif-containing proteins in Arabidopsis as interacting proteins of WRKY transcription factors.</title>
        <authorList>
            <person name="Cheng Y."/>
            <person name="Zhou Y."/>
            <person name="Yang Y."/>
            <person name="Chi Y.J."/>
            <person name="Zhou J."/>
            <person name="Chen J.Y."/>
            <person name="Wang F."/>
            <person name="Fan B."/>
            <person name="Shi K."/>
            <person name="Zhou Y.H."/>
            <person name="Yu J.Q."/>
            <person name="Chen Z."/>
        </authorList>
    </citation>
    <scope>INTERACTION WITH VQ1 AND VQ10</scope>
    <scope>MUTAGENESIS OF ASP-359; ASP-362 AND ARG-366</scope>
</reference>